<protein>
    <recommendedName>
        <fullName evidence="1">Hydroxylamine reductase</fullName>
        <ecNumber evidence="1">1.7.99.1</ecNumber>
    </recommendedName>
    <alternativeName>
        <fullName evidence="1">Hybrid-cluster protein</fullName>
        <shortName evidence="1">HCP</shortName>
    </alternativeName>
    <alternativeName>
        <fullName evidence="1">Prismane protein</fullName>
    </alternativeName>
</protein>
<evidence type="ECO:0000255" key="1">
    <source>
        <dbReference type="HAMAP-Rule" id="MF_00069"/>
    </source>
</evidence>
<name>HCP_SHEAM</name>
<organism>
    <name type="scientific">Shewanella amazonensis (strain ATCC BAA-1098 / SB2B)</name>
    <dbReference type="NCBI Taxonomy" id="326297"/>
    <lineage>
        <taxon>Bacteria</taxon>
        <taxon>Pseudomonadati</taxon>
        <taxon>Pseudomonadota</taxon>
        <taxon>Gammaproteobacteria</taxon>
        <taxon>Alteromonadales</taxon>
        <taxon>Shewanellaceae</taxon>
        <taxon>Shewanella</taxon>
    </lineage>
</organism>
<accession>A1S3Z6</accession>
<reference key="1">
    <citation type="submission" date="2006-12" db="EMBL/GenBank/DDBJ databases">
        <title>Complete sequence of Shewanella amazonensis SB2B.</title>
        <authorList>
            <consortium name="US DOE Joint Genome Institute"/>
            <person name="Copeland A."/>
            <person name="Lucas S."/>
            <person name="Lapidus A."/>
            <person name="Barry K."/>
            <person name="Detter J.C."/>
            <person name="Glavina del Rio T."/>
            <person name="Hammon N."/>
            <person name="Israni S."/>
            <person name="Dalin E."/>
            <person name="Tice H."/>
            <person name="Pitluck S."/>
            <person name="Munk A.C."/>
            <person name="Brettin T."/>
            <person name="Bruce D."/>
            <person name="Han C."/>
            <person name="Tapia R."/>
            <person name="Gilna P."/>
            <person name="Schmutz J."/>
            <person name="Larimer F."/>
            <person name="Land M."/>
            <person name="Hauser L."/>
            <person name="Kyrpides N."/>
            <person name="Mikhailova N."/>
            <person name="Fredrickson J."/>
            <person name="Richardson P."/>
        </authorList>
    </citation>
    <scope>NUCLEOTIDE SEQUENCE [LARGE SCALE GENOMIC DNA]</scope>
    <source>
        <strain>ATCC BAA-1098 / SB2B</strain>
    </source>
</reference>
<comment type="function">
    <text evidence="1">Catalyzes the reduction of hydroxylamine to form NH(3) and H(2)O.</text>
</comment>
<comment type="catalytic activity">
    <reaction evidence="1">
        <text>A + NH4(+) + H2O = hydroxylamine + AH2 + H(+)</text>
        <dbReference type="Rhea" id="RHEA:22052"/>
        <dbReference type="ChEBI" id="CHEBI:13193"/>
        <dbReference type="ChEBI" id="CHEBI:15377"/>
        <dbReference type="ChEBI" id="CHEBI:15378"/>
        <dbReference type="ChEBI" id="CHEBI:15429"/>
        <dbReference type="ChEBI" id="CHEBI:17499"/>
        <dbReference type="ChEBI" id="CHEBI:28938"/>
        <dbReference type="EC" id="1.7.99.1"/>
    </reaction>
</comment>
<comment type="cofactor">
    <cofactor evidence="1">
        <name>[2Fe-2S] cluster</name>
        <dbReference type="ChEBI" id="CHEBI:190135"/>
    </cofactor>
    <text evidence="1">Binds 1 [2Fe-2S] cluster.</text>
</comment>
<comment type="cofactor">
    <cofactor evidence="1">
        <name>hybrid [4Fe-2O-2S] cluster</name>
        <dbReference type="ChEBI" id="CHEBI:60519"/>
    </cofactor>
    <text evidence="1">Binds 1 hybrid [4Fe-2O-2S] cluster.</text>
</comment>
<comment type="subcellular location">
    <subcellularLocation>
        <location evidence="1">Cytoplasm</location>
    </subcellularLocation>
</comment>
<comment type="similarity">
    <text evidence="1">Belongs to the HCP family.</text>
</comment>
<feature type="chain" id="PRO_1000009162" description="Hydroxylamine reductase">
    <location>
        <begin position="1"/>
        <end position="554"/>
    </location>
</feature>
<feature type="binding site" evidence="1">
    <location>
        <position position="3"/>
    </location>
    <ligand>
        <name>[2Fe-2S] cluster</name>
        <dbReference type="ChEBI" id="CHEBI:190135"/>
    </ligand>
</feature>
<feature type="binding site" evidence="1">
    <location>
        <position position="6"/>
    </location>
    <ligand>
        <name>[2Fe-2S] cluster</name>
        <dbReference type="ChEBI" id="CHEBI:190135"/>
    </ligand>
</feature>
<feature type="binding site" evidence="1">
    <location>
        <position position="18"/>
    </location>
    <ligand>
        <name>[2Fe-2S] cluster</name>
        <dbReference type="ChEBI" id="CHEBI:190135"/>
    </ligand>
</feature>
<feature type="binding site" evidence="1">
    <location>
        <position position="25"/>
    </location>
    <ligand>
        <name>[2Fe-2S] cluster</name>
        <dbReference type="ChEBI" id="CHEBI:190135"/>
    </ligand>
</feature>
<feature type="binding site" evidence="1">
    <location>
        <position position="252"/>
    </location>
    <ligand>
        <name>hybrid [4Fe-2O-2S] cluster</name>
        <dbReference type="ChEBI" id="CHEBI:60519"/>
    </ligand>
</feature>
<feature type="binding site" evidence="1">
    <location>
        <position position="276"/>
    </location>
    <ligand>
        <name>hybrid [4Fe-2O-2S] cluster</name>
        <dbReference type="ChEBI" id="CHEBI:60519"/>
    </ligand>
</feature>
<feature type="binding site" evidence="1">
    <location>
        <position position="320"/>
    </location>
    <ligand>
        <name>hybrid [4Fe-2O-2S] cluster</name>
        <dbReference type="ChEBI" id="CHEBI:60519"/>
    </ligand>
</feature>
<feature type="binding site" description="via persulfide group" evidence="1">
    <location>
        <position position="408"/>
    </location>
    <ligand>
        <name>hybrid [4Fe-2O-2S] cluster</name>
        <dbReference type="ChEBI" id="CHEBI:60519"/>
    </ligand>
</feature>
<feature type="binding site" evidence="1">
    <location>
        <position position="436"/>
    </location>
    <ligand>
        <name>hybrid [4Fe-2O-2S] cluster</name>
        <dbReference type="ChEBI" id="CHEBI:60519"/>
    </ligand>
</feature>
<feature type="binding site" evidence="1">
    <location>
        <position position="461"/>
    </location>
    <ligand>
        <name>hybrid [4Fe-2O-2S] cluster</name>
        <dbReference type="ChEBI" id="CHEBI:60519"/>
    </ligand>
</feature>
<feature type="binding site" evidence="1">
    <location>
        <position position="495"/>
    </location>
    <ligand>
        <name>hybrid [4Fe-2O-2S] cluster</name>
        <dbReference type="ChEBI" id="CHEBI:60519"/>
    </ligand>
</feature>
<feature type="binding site" evidence="1">
    <location>
        <position position="497"/>
    </location>
    <ligand>
        <name>hybrid [4Fe-2O-2S] cluster</name>
        <dbReference type="ChEBI" id="CHEBI:60519"/>
    </ligand>
</feature>
<feature type="modified residue" description="Cysteine persulfide" evidence="1">
    <location>
        <position position="408"/>
    </location>
</feature>
<sequence length="554" mass="60367">MFCIQCEQTIRTPAGNGCSYAQGMCGKLAATSDLQDLLIYMLKGVSAWAVKARELGLPPTEADTFVPKAFFATLTNVNFDDERIIEYARKAESLRNVLKTQCTEAAQKAGIRLESLPDSASVLLGTSKPELLEQAKAALPNLGKDDIHEDVMALRLLCLYGLKGAAAYMEHARVLEQQSADIAAEFHRIMAFLGTDSVDADALFTVAMDIGQLNFKVMAMLDEGETAAFGHPEPTQVNTKPVKGKAILVSGHDMKDLELILKQTQGKGINVYTHGEMLPALAYPEFKQYPHLVGNYGSAWQNQQKEFANFPGAVVMTSNCIIDPNVGQYADRIFTRSIVGWPGVVHLEGDDFSAVIEKALSLEGFLYDEISHQITIGFARNALMAAAPAVVENVKNGSIRHFFLVGGCDGDKAERSYFTDFAKATPNDSLILTLGCGKYKFNKLEFGDINGIPRLLDIGQCNDAYSAIQLAIALSEVFECDINELPLSLVLSWFEQKAIVILLTLLSLGVKNIRTGPTPPAFLTPNLLKVLEDKFGLKNTTTVEADLNAILNVA</sequence>
<proteinExistence type="inferred from homology"/>
<gene>
    <name evidence="1" type="primary">hcp</name>
    <name type="ordered locus">Sama_0895</name>
</gene>
<keyword id="KW-0001">2Fe-2S</keyword>
<keyword id="KW-0963">Cytoplasm</keyword>
<keyword id="KW-0408">Iron</keyword>
<keyword id="KW-0411">Iron-sulfur</keyword>
<keyword id="KW-0479">Metal-binding</keyword>
<keyword id="KW-0560">Oxidoreductase</keyword>
<keyword id="KW-1185">Reference proteome</keyword>
<dbReference type="EC" id="1.7.99.1" evidence="1"/>
<dbReference type="EMBL" id="CP000507">
    <property type="protein sequence ID" value="ABL99102.1"/>
    <property type="molecule type" value="Genomic_DNA"/>
</dbReference>
<dbReference type="RefSeq" id="WP_011759012.1">
    <property type="nucleotide sequence ID" value="NC_008700.1"/>
</dbReference>
<dbReference type="SMR" id="A1S3Z6"/>
<dbReference type="STRING" id="326297.Sama_0895"/>
<dbReference type="KEGG" id="saz:Sama_0895"/>
<dbReference type="eggNOG" id="COG1151">
    <property type="taxonomic scope" value="Bacteria"/>
</dbReference>
<dbReference type="HOGENOM" id="CLU_038344_2_0_6"/>
<dbReference type="OrthoDB" id="9761526at2"/>
<dbReference type="Proteomes" id="UP000009175">
    <property type="component" value="Chromosome"/>
</dbReference>
<dbReference type="GO" id="GO:0005737">
    <property type="term" value="C:cytoplasm"/>
    <property type="evidence" value="ECO:0007669"/>
    <property type="project" value="UniProtKB-SubCell"/>
</dbReference>
<dbReference type="GO" id="GO:0051537">
    <property type="term" value="F:2 iron, 2 sulfur cluster binding"/>
    <property type="evidence" value="ECO:0007669"/>
    <property type="project" value="UniProtKB-KW"/>
</dbReference>
<dbReference type="GO" id="GO:0050418">
    <property type="term" value="F:hydroxylamine reductase activity"/>
    <property type="evidence" value="ECO:0007669"/>
    <property type="project" value="UniProtKB-UniRule"/>
</dbReference>
<dbReference type="GO" id="GO:0046872">
    <property type="term" value="F:metal ion binding"/>
    <property type="evidence" value="ECO:0007669"/>
    <property type="project" value="UniProtKB-KW"/>
</dbReference>
<dbReference type="GO" id="GO:0004601">
    <property type="term" value="F:peroxidase activity"/>
    <property type="evidence" value="ECO:0007669"/>
    <property type="project" value="TreeGrafter"/>
</dbReference>
<dbReference type="GO" id="GO:0042542">
    <property type="term" value="P:response to hydrogen peroxide"/>
    <property type="evidence" value="ECO:0007669"/>
    <property type="project" value="TreeGrafter"/>
</dbReference>
<dbReference type="CDD" id="cd01914">
    <property type="entry name" value="HCP"/>
    <property type="match status" value="1"/>
</dbReference>
<dbReference type="FunFam" id="1.20.1270.20:FF:000001">
    <property type="entry name" value="Hydroxylamine reductase"/>
    <property type="match status" value="1"/>
</dbReference>
<dbReference type="FunFam" id="1.20.1270.20:FF:000002">
    <property type="entry name" value="Hydroxylamine reductase"/>
    <property type="match status" value="1"/>
</dbReference>
<dbReference type="FunFam" id="3.40.50.2030:FF:000001">
    <property type="entry name" value="Hydroxylamine reductase"/>
    <property type="match status" value="1"/>
</dbReference>
<dbReference type="FunFam" id="3.40.50.2030:FF:000002">
    <property type="entry name" value="Hydroxylamine reductase"/>
    <property type="match status" value="1"/>
</dbReference>
<dbReference type="Gene3D" id="1.20.1270.20">
    <property type="match status" value="2"/>
</dbReference>
<dbReference type="Gene3D" id="3.40.50.2030">
    <property type="match status" value="2"/>
</dbReference>
<dbReference type="HAMAP" id="MF_00069">
    <property type="entry name" value="Hydroxylam_reduct"/>
    <property type="match status" value="1"/>
</dbReference>
<dbReference type="InterPro" id="IPR004137">
    <property type="entry name" value="HCP/CODH"/>
</dbReference>
<dbReference type="InterPro" id="IPR010048">
    <property type="entry name" value="Hydroxylam_reduct"/>
</dbReference>
<dbReference type="InterPro" id="IPR016099">
    <property type="entry name" value="Prismane-like_a/b-sand"/>
</dbReference>
<dbReference type="InterPro" id="IPR011254">
    <property type="entry name" value="Prismane-like_sf"/>
</dbReference>
<dbReference type="InterPro" id="IPR016100">
    <property type="entry name" value="Prismane_a-bundle"/>
</dbReference>
<dbReference type="NCBIfam" id="TIGR01703">
    <property type="entry name" value="hybrid_clust"/>
    <property type="match status" value="1"/>
</dbReference>
<dbReference type="NCBIfam" id="NF003658">
    <property type="entry name" value="PRK05290.1"/>
    <property type="match status" value="1"/>
</dbReference>
<dbReference type="PANTHER" id="PTHR30109">
    <property type="entry name" value="HYDROXYLAMINE REDUCTASE"/>
    <property type="match status" value="1"/>
</dbReference>
<dbReference type="PANTHER" id="PTHR30109:SF0">
    <property type="entry name" value="HYDROXYLAMINE REDUCTASE"/>
    <property type="match status" value="1"/>
</dbReference>
<dbReference type="Pfam" id="PF03063">
    <property type="entry name" value="Prismane"/>
    <property type="match status" value="1"/>
</dbReference>
<dbReference type="PIRSF" id="PIRSF000076">
    <property type="entry name" value="HCP"/>
    <property type="match status" value="1"/>
</dbReference>
<dbReference type="SUPFAM" id="SSF56821">
    <property type="entry name" value="Prismane protein-like"/>
    <property type="match status" value="1"/>
</dbReference>